<keyword id="KW-0687">Ribonucleoprotein</keyword>
<keyword id="KW-0689">Ribosomal protein</keyword>
<gene>
    <name evidence="1" type="primary">rplS</name>
    <name type="ordered locus">Sez_0754</name>
</gene>
<comment type="function">
    <text evidence="1">This protein is located at the 30S-50S ribosomal subunit interface and may play a role in the structure and function of the aminoacyl-tRNA binding site.</text>
</comment>
<comment type="similarity">
    <text evidence="1">Belongs to the bacterial ribosomal protein bL19 family.</text>
</comment>
<reference key="1">
    <citation type="journal article" date="2008" name="PLoS ONE">
        <title>Genome sequence of a lancefield group C Streptococcus zooepidemicus strain causing epidemic nephritis: new information about an old disease.</title>
        <authorList>
            <person name="Beres S.B."/>
            <person name="Sesso R."/>
            <person name="Pinto S.W.L."/>
            <person name="Hoe N.P."/>
            <person name="Porcella S.F."/>
            <person name="Deleo F.R."/>
            <person name="Musser J.M."/>
        </authorList>
    </citation>
    <scope>NUCLEOTIDE SEQUENCE [LARGE SCALE GENOMIC DNA]</scope>
    <source>
        <strain>MGCS10565</strain>
    </source>
</reference>
<organism>
    <name type="scientific">Streptococcus equi subsp. zooepidemicus (strain MGCS10565)</name>
    <dbReference type="NCBI Taxonomy" id="552526"/>
    <lineage>
        <taxon>Bacteria</taxon>
        <taxon>Bacillati</taxon>
        <taxon>Bacillota</taxon>
        <taxon>Bacilli</taxon>
        <taxon>Lactobacillales</taxon>
        <taxon>Streptococcaceae</taxon>
        <taxon>Streptococcus</taxon>
    </lineage>
</organism>
<dbReference type="EMBL" id="CP001129">
    <property type="protein sequence ID" value="ACG62117.1"/>
    <property type="molecule type" value="Genomic_DNA"/>
</dbReference>
<dbReference type="RefSeq" id="WP_012515391.1">
    <property type="nucleotide sequence ID" value="NC_011134.1"/>
</dbReference>
<dbReference type="SMR" id="B4U2A0"/>
<dbReference type="KEGG" id="sez:Sez_0754"/>
<dbReference type="HOGENOM" id="CLU_103507_2_1_9"/>
<dbReference type="Proteomes" id="UP000001873">
    <property type="component" value="Chromosome"/>
</dbReference>
<dbReference type="GO" id="GO:0022625">
    <property type="term" value="C:cytosolic large ribosomal subunit"/>
    <property type="evidence" value="ECO:0007669"/>
    <property type="project" value="TreeGrafter"/>
</dbReference>
<dbReference type="GO" id="GO:0003735">
    <property type="term" value="F:structural constituent of ribosome"/>
    <property type="evidence" value="ECO:0007669"/>
    <property type="project" value="InterPro"/>
</dbReference>
<dbReference type="GO" id="GO:0006412">
    <property type="term" value="P:translation"/>
    <property type="evidence" value="ECO:0007669"/>
    <property type="project" value="UniProtKB-UniRule"/>
</dbReference>
<dbReference type="FunFam" id="2.30.30.790:FF:000001">
    <property type="entry name" value="50S ribosomal protein L19"/>
    <property type="match status" value="1"/>
</dbReference>
<dbReference type="Gene3D" id="2.30.30.790">
    <property type="match status" value="1"/>
</dbReference>
<dbReference type="HAMAP" id="MF_00402">
    <property type="entry name" value="Ribosomal_bL19"/>
    <property type="match status" value="1"/>
</dbReference>
<dbReference type="InterPro" id="IPR001857">
    <property type="entry name" value="Ribosomal_bL19"/>
</dbReference>
<dbReference type="InterPro" id="IPR018257">
    <property type="entry name" value="Ribosomal_bL19_CS"/>
</dbReference>
<dbReference type="InterPro" id="IPR038657">
    <property type="entry name" value="Ribosomal_bL19_sf"/>
</dbReference>
<dbReference type="InterPro" id="IPR008991">
    <property type="entry name" value="Translation_prot_SH3-like_sf"/>
</dbReference>
<dbReference type="NCBIfam" id="TIGR01024">
    <property type="entry name" value="rplS_bact"/>
    <property type="match status" value="1"/>
</dbReference>
<dbReference type="PANTHER" id="PTHR15680:SF9">
    <property type="entry name" value="LARGE RIBOSOMAL SUBUNIT PROTEIN BL19M"/>
    <property type="match status" value="1"/>
</dbReference>
<dbReference type="PANTHER" id="PTHR15680">
    <property type="entry name" value="RIBOSOMAL PROTEIN L19"/>
    <property type="match status" value="1"/>
</dbReference>
<dbReference type="Pfam" id="PF01245">
    <property type="entry name" value="Ribosomal_L19"/>
    <property type="match status" value="1"/>
</dbReference>
<dbReference type="PIRSF" id="PIRSF002191">
    <property type="entry name" value="Ribosomal_L19"/>
    <property type="match status" value="1"/>
</dbReference>
<dbReference type="PRINTS" id="PR00061">
    <property type="entry name" value="RIBOSOMALL19"/>
</dbReference>
<dbReference type="SUPFAM" id="SSF50104">
    <property type="entry name" value="Translation proteins SH3-like domain"/>
    <property type="match status" value="1"/>
</dbReference>
<dbReference type="PROSITE" id="PS01015">
    <property type="entry name" value="RIBOSOMAL_L19"/>
    <property type="match status" value="1"/>
</dbReference>
<name>RL19_STREM</name>
<protein>
    <recommendedName>
        <fullName evidence="1">Large ribosomal subunit protein bL19</fullName>
    </recommendedName>
    <alternativeName>
        <fullName evidence="2">50S ribosomal protein L19</fullName>
    </alternativeName>
</protein>
<proteinExistence type="inferred from homology"/>
<feature type="chain" id="PRO_1000193892" description="Large ribosomal subunit protein bL19">
    <location>
        <begin position="1"/>
        <end position="115"/>
    </location>
</feature>
<accession>B4U2A0</accession>
<sequence length="115" mass="13148">MNPLIQSLTEGQLRTDIPSFRPGDTVRVHAKVVEGSRERIQIFEGVVISRKGQGISEMYTVRKISSGIGVERTFPIHTPRVEKIEVVRHGKVRRAKLYYLRALQGKAARIKEIRR</sequence>
<evidence type="ECO:0000255" key="1">
    <source>
        <dbReference type="HAMAP-Rule" id="MF_00402"/>
    </source>
</evidence>
<evidence type="ECO:0000305" key="2"/>